<comment type="function">
    <text evidence="1">Part of the high-affinity ATP-driven potassium transport (or Kdp) system, which catalyzes the hydrolysis of ATP coupled with the electrogenic transport of potassium into the cytoplasm. This subunit acts as a catalytic chaperone that increases the ATP-binding affinity of the ATP-hydrolyzing subunit KdpB by the formation of a transient KdpB/KdpC/ATP ternary complex.</text>
</comment>
<comment type="subunit">
    <text evidence="1">The system is composed of three essential subunits: KdpA, KdpB and KdpC.</text>
</comment>
<comment type="subcellular location">
    <subcellularLocation>
        <location evidence="1">Cell inner membrane</location>
        <topology evidence="1">Single-pass membrane protein</topology>
    </subcellularLocation>
</comment>
<comment type="similarity">
    <text evidence="1">Belongs to the KdpC family.</text>
</comment>
<proteinExistence type="inferred from homology"/>
<reference key="1">
    <citation type="journal article" date="2001" name="Nature">
        <title>Genome sequence of enterohaemorrhagic Escherichia coli O157:H7.</title>
        <authorList>
            <person name="Perna N.T."/>
            <person name="Plunkett G. III"/>
            <person name="Burland V."/>
            <person name="Mau B."/>
            <person name="Glasner J.D."/>
            <person name="Rose D.J."/>
            <person name="Mayhew G.F."/>
            <person name="Evans P.S."/>
            <person name="Gregor J."/>
            <person name="Kirkpatrick H.A."/>
            <person name="Posfai G."/>
            <person name="Hackett J."/>
            <person name="Klink S."/>
            <person name="Boutin A."/>
            <person name="Shao Y."/>
            <person name="Miller L."/>
            <person name="Grotbeck E.J."/>
            <person name="Davis N.W."/>
            <person name="Lim A."/>
            <person name="Dimalanta E.T."/>
            <person name="Potamousis K."/>
            <person name="Apodaca J."/>
            <person name="Anantharaman T.S."/>
            <person name="Lin J."/>
            <person name="Yen G."/>
            <person name="Schwartz D.C."/>
            <person name="Welch R.A."/>
            <person name="Blattner F.R."/>
        </authorList>
    </citation>
    <scope>NUCLEOTIDE SEQUENCE [LARGE SCALE GENOMIC DNA]</scope>
    <source>
        <strain>O157:H7 / EDL933 / ATCC 700927 / EHEC</strain>
    </source>
</reference>
<reference key="2">
    <citation type="journal article" date="2001" name="DNA Res.">
        <title>Complete genome sequence of enterohemorrhagic Escherichia coli O157:H7 and genomic comparison with a laboratory strain K-12.</title>
        <authorList>
            <person name="Hayashi T."/>
            <person name="Makino K."/>
            <person name="Ohnishi M."/>
            <person name="Kurokawa K."/>
            <person name="Ishii K."/>
            <person name="Yokoyama K."/>
            <person name="Han C.-G."/>
            <person name="Ohtsubo E."/>
            <person name="Nakayama K."/>
            <person name="Murata T."/>
            <person name="Tanaka M."/>
            <person name="Tobe T."/>
            <person name="Iida T."/>
            <person name="Takami H."/>
            <person name="Honda T."/>
            <person name="Sasakawa C."/>
            <person name="Ogasawara N."/>
            <person name="Yasunaga T."/>
            <person name="Kuhara S."/>
            <person name="Shiba T."/>
            <person name="Hattori M."/>
            <person name="Shinagawa H."/>
        </authorList>
    </citation>
    <scope>NUCLEOTIDE SEQUENCE [LARGE SCALE GENOMIC DNA]</scope>
    <source>
        <strain>O157:H7 / Sakai / RIMD 0509952 / EHEC</strain>
    </source>
</reference>
<dbReference type="EMBL" id="AE005174">
    <property type="protein sequence ID" value="AAG55017.1"/>
    <property type="molecule type" value="Genomic_DNA"/>
</dbReference>
<dbReference type="EMBL" id="BA000007">
    <property type="protein sequence ID" value="BAB34147.1"/>
    <property type="molecule type" value="Genomic_DNA"/>
</dbReference>
<dbReference type="PIR" id="D90719">
    <property type="entry name" value="D90719"/>
</dbReference>
<dbReference type="PIR" id="E85569">
    <property type="entry name" value="E85569"/>
</dbReference>
<dbReference type="RefSeq" id="NP_308751.1">
    <property type="nucleotide sequence ID" value="NC_002695.1"/>
</dbReference>
<dbReference type="RefSeq" id="WP_001301506.1">
    <property type="nucleotide sequence ID" value="NZ_VOAI01000012.1"/>
</dbReference>
<dbReference type="SMR" id="Q8X9G0"/>
<dbReference type="STRING" id="155864.Z0843"/>
<dbReference type="GeneID" id="917093"/>
<dbReference type="KEGG" id="ece:Z0843"/>
<dbReference type="KEGG" id="ecs:ECs_0724"/>
<dbReference type="PATRIC" id="fig|386585.9.peg.840"/>
<dbReference type="eggNOG" id="COG2156">
    <property type="taxonomic scope" value="Bacteria"/>
</dbReference>
<dbReference type="HOGENOM" id="CLU_077094_2_0_6"/>
<dbReference type="OMA" id="KYFWPRP"/>
<dbReference type="Proteomes" id="UP000000558">
    <property type="component" value="Chromosome"/>
</dbReference>
<dbReference type="Proteomes" id="UP000002519">
    <property type="component" value="Chromosome"/>
</dbReference>
<dbReference type="GO" id="GO:0005886">
    <property type="term" value="C:plasma membrane"/>
    <property type="evidence" value="ECO:0007669"/>
    <property type="project" value="UniProtKB-SubCell"/>
</dbReference>
<dbReference type="GO" id="GO:0005524">
    <property type="term" value="F:ATP binding"/>
    <property type="evidence" value="ECO:0007669"/>
    <property type="project" value="UniProtKB-UniRule"/>
</dbReference>
<dbReference type="GO" id="GO:0008556">
    <property type="term" value="F:P-type potassium transmembrane transporter activity"/>
    <property type="evidence" value="ECO:0007669"/>
    <property type="project" value="InterPro"/>
</dbReference>
<dbReference type="HAMAP" id="MF_00276">
    <property type="entry name" value="KdpC"/>
    <property type="match status" value="1"/>
</dbReference>
<dbReference type="InterPro" id="IPR003820">
    <property type="entry name" value="KdpC"/>
</dbReference>
<dbReference type="NCBIfam" id="TIGR00681">
    <property type="entry name" value="kdpC"/>
    <property type="match status" value="1"/>
</dbReference>
<dbReference type="NCBIfam" id="NF001454">
    <property type="entry name" value="PRK00315.1"/>
    <property type="match status" value="1"/>
</dbReference>
<dbReference type="PANTHER" id="PTHR30042">
    <property type="entry name" value="POTASSIUM-TRANSPORTING ATPASE C CHAIN"/>
    <property type="match status" value="1"/>
</dbReference>
<dbReference type="PANTHER" id="PTHR30042:SF2">
    <property type="entry name" value="POTASSIUM-TRANSPORTING ATPASE KDPC SUBUNIT"/>
    <property type="match status" value="1"/>
</dbReference>
<dbReference type="Pfam" id="PF02669">
    <property type="entry name" value="KdpC"/>
    <property type="match status" value="1"/>
</dbReference>
<dbReference type="PIRSF" id="PIRSF001296">
    <property type="entry name" value="K_ATPase_KdpC"/>
    <property type="match status" value="1"/>
</dbReference>
<evidence type="ECO:0000255" key="1">
    <source>
        <dbReference type="HAMAP-Rule" id="MF_00276"/>
    </source>
</evidence>
<accession>Q8X9G0</accession>
<keyword id="KW-0067">ATP-binding</keyword>
<keyword id="KW-0997">Cell inner membrane</keyword>
<keyword id="KW-1003">Cell membrane</keyword>
<keyword id="KW-0406">Ion transport</keyword>
<keyword id="KW-0472">Membrane</keyword>
<keyword id="KW-0547">Nucleotide-binding</keyword>
<keyword id="KW-0630">Potassium</keyword>
<keyword id="KW-0633">Potassium transport</keyword>
<keyword id="KW-1185">Reference proteome</keyword>
<keyword id="KW-0812">Transmembrane</keyword>
<keyword id="KW-1133">Transmembrane helix</keyword>
<keyword id="KW-0813">Transport</keyword>
<feature type="chain" id="PRO_0000196991" description="Potassium-transporting ATPase KdpC subunit">
    <location>
        <begin position="1"/>
        <end position="190"/>
    </location>
</feature>
<feature type="transmembrane region" description="Helical" evidence="1">
    <location>
        <begin position="10"/>
        <end position="30"/>
    </location>
</feature>
<organism>
    <name type="scientific">Escherichia coli O157:H7</name>
    <dbReference type="NCBI Taxonomy" id="83334"/>
    <lineage>
        <taxon>Bacteria</taxon>
        <taxon>Pseudomonadati</taxon>
        <taxon>Pseudomonadota</taxon>
        <taxon>Gammaproteobacteria</taxon>
        <taxon>Enterobacterales</taxon>
        <taxon>Enterobacteriaceae</taxon>
        <taxon>Escherichia</taxon>
    </lineage>
</organism>
<sequence length="190" mass="20395">MRGLRPALSTFIFLLLITGGVYPLLTTALGQWWFPWQANGSLIREGDTVRGSALIGQNFTDNGYFHGRPSATAEMPYNPQASGGSNLAVSNPELDKLIAARVAALRAANPNASTSVPVELVTASASGLDNNITPQAAAWQIPRVAKARNLSVEQLTQLIAKYSQQPLVKYIGQPVVNIVELNLALDKLDE</sequence>
<gene>
    <name evidence="1" type="primary">kdpC</name>
    <name type="ordered locus">Z0843</name>
    <name type="ordered locus">ECs0724</name>
</gene>
<protein>
    <recommendedName>
        <fullName evidence="1">Potassium-transporting ATPase KdpC subunit</fullName>
    </recommendedName>
    <alternativeName>
        <fullName evidence="1">ATP phosphohydrolase [potassium-transporting] C chain</fullName>
    </alternativeName>
    <alternativeName>
        <fullName evidence="1">Potassium-binding and translocating subunit C</fullName>
    </alternativeName>
    <alternativeName>
        <fullName evidence="1">Potassium-translocating ATPase C chain</fullName>
    </alternativeName>
</protein>
<name>KDPC_ECO57</name>